<feature type="chain" id="PRO_0000419541" description="Coumaroyl-CoA:anthocyanidin 3-O-glucoside-6''-O-coumaroyltransferase 2">
    <location>
        <begin position="1"/>
        <end position="465"/>
    </location>
</feature>
<feature type="active site" description="Proton acceptor" evidence="1">
    <location>
        <position position="173"/>
    </location>
</feature>
<feature type="active site" description="Proton acceptor" evidence="1">
    <location>
        <position position="406"/>
    </location>
</feature>
<feature type="modified residue" description="N-acetylmethionine" evidence="2">
    <location>
        <position position="1"/>
    </location>
</feature>
<dbReference type="EC" id="2.3.1.-"/>
<dbReference type="EMBL" id="AC002560">
    <property type="protein sequence ID" value="AAF86513.1"/>
    <property type="molecule type" value="Genomic_DNA"/>
</dbReference>
<dbReference type="EMBL" id="CP002684">
    <property type="status" value="NOT_ANNOTATED_CDS"/>
    <property type="molecule type" value="Genomic_DNA"/>
</dbReference>
<dbReference type="PIR" id="D86166">
    <property type="entry name" value="D86166"/>
</dbReference>
<dbReference type="PIR" id="T00908">
    <property type="entry name" value="T00908"/>
</dbReference>
<dbReference type="SMR" id="Q9LR73"/>
<dbReference type="STRING" id="3702.Q9LR73"/>
<dbReference type="PaxDb" id="3702-AT1G03495.1"/>
<dbReference type="Araport" id="AT1G03495"/>
<dbReference type="TAIR" id="AT1G03495"/>
<dbReference type="eggNOG" id="ENOG502QPXT">
    <property type="taxonomic scope" value="Eukaryota"/>
</dbReference>
<dbReference type="HOGENOM" id="CLU_588753_0_0_1"/>
<dbReference type="InParanoid" id="Q9LR73"/>
<dbReference type="PhylomeDB" id="Q9LR73"/>
<dbReference type="BioCyc" id="ARA:AT1G03495-MONOMER"/>
<dbReference type="BioCyc" id="MetaCyc:MONOMER-18504"/>
<dbReference type="PRO" id="PR:Q9LR73"/>
<dbReference type="Proteomes" id="UP000006548">
    <property type="component" value="Chromosome 1"/>
</dbReference>
<dbReference type="ExpressionAtlas" id="Q9LR73">
    <property type="expression patterns" value="baseline and differential"/>
</dbReference>
<dbReference type="GO" id="GO:0016747">
    <property type="term" value="F:acyltransferase activity, transferring groups other than amino-acyl groups"/>
    <property type="evidence" value="ECO:0007669"/>
    <property type="project" value="UniProtKB-ARBA"/>
</dbReference>
<dbReference type="Gene3D" id="3.30.559.10">
    <property type="entry name" value="Chloramphenicol acetyltransferase-like domain"/>
    <property type="match status" value="2"/>
</dbReference>
<dbReference type="InterPro" id="IPR023213">
    <property type="entry name" value="CAT-like_dom_sf"/>
</dbReference>
<dbReference type="InterPro" id="IPR051504">
    <property type="entry name" value="Plant_metabolite_acyltrans"/>
</dbReference>
<dbReference type="PANTHER" id="PTHR31625">
    <property type="match status" value="1"/>
</dbReference>
<dbReference type="Pfam" id="PF02458">
    <property type="entry name" value="Transferase"/>
    <property type="match status" value="1"/>
</dbReference>
<sequence>MAAQLQPYNIIETCHISPPKGTVASTTLPLTFFDAPWLSLPLADSLFFFSYQNSTESFLQDFVPNLKHSLSITLQHFFPYAGKLIIPPRPDPPYLHYNAGEDSLVFTVAESTETDFDQLKSDSPKDISVLHGVLPKLPPPHVSPEGIQMRPIMAMQVTIFPGAGICIGNSATHVVADGVTFSHFMKYWMSLTKSSGKDPATVLLPSLPIHSCRNIIKDPGEVAAGHLERFWSQNSAKHSSHVTPENMVRATFTLSRKQIDNLKSWVTEQSENQSPVSTFVVTLAFIWVSLIKTLVQDSETEAKDEVFHLMINVDCRNRLKYTQPIPQTYFGNCMAPGIVSVKKHDLLGEKCVMAASDAITARIKDMLSSDLLKTAPRWGQGVRKWVMSHYPTSIAGAPKLGLYDMDFGLGKPCKMEIVHIETGGSIAFSESRDGSNGVEIGIALEKKKMDVFDSLLQKGIKKFAT</sequence>
<proteinExistence type="evidence at protein level"/>
<protein>
    <recommendedName>
        <fullName>Coumaroyl-CoA:anthocyanidin 3-O-glucoside-6''-O-coumaroyltransferase 2</fullName>
        <ecNumber>2.3.1.-</ecNumber>
    </recommendedName>
</protein>
<reference key="1">
    <citation type="journal article" date="2000" name="Nature">
        <title>Sequence and analysis of chromosome 1 of the plant Arabidopsis thaliana.</title>
        <authorList>
            <person name="Theologis A."/>
            <person name="Ecker J.R."/>
            <person name="Palm C.J."/>
            <person name="Federspiel N.A."/>
            <person name="Kaul S."/>
            <person name="White O."/>
            <person name="Alonso J."/>
            <person name="Altafi H."/>
            <person name="Araujo R."/>
            <person name="Bowman C.L."/>
            <person name="Brooks S.Y."/>
            <person name="Buehler E."/>
            <person name="Chan A."/>
            <person name="Chao Q."/>
            <person name="Chen H."/>
            <person name="Cheuk R.F."/>
            <person name="Chin C.W."/>
            <person name="Chung M.K."/>
            <person name="Conn L."/>
            <person name="Conway A.B."/>
            <person name="Conway A.R."/>
            <person name="Creasy T.H."/>
            <person name="Dewar K."/>
            <person name="Dunn P."/>
            <person name="Etgu P."/>
            <person name="Feldblyum T.V."/>
            <person name="Feng J.-D."/>
            <person name="Fong B."/>
            <person name="Fujii C.Y."/>
            <person name="Gill J.E."/>
            <person name="Goldsmith A.D."/>
            <person name="Haas B."/>
            <person name="Hansen N.F."/>
            <person name="Hughes B."/>
            <person name="Huizar L."/>
            <person name="Hunter J.L."/>
            <person name="Jenkins J."/>
            <person name="Johnson-Hopson C."/>
            <person name="Khan S."/>
            <person name="Khaykin E."/>
            <person name="Kim C.J."/>
            <person name="Koo H.L."/>
            <person name="Kremenetskaia I."/>
            <person name="Kurtz D.B."/>
            <person name="Kwan A."/>
            <person name="Lam B."/>
            <person name="Langin-Hooper S."/>
            <person name="Lee A."/>
            <person name="Lee J.M."/>
            <person name="Lenz C.A."/>
            <person name="Li J.H."/>
            <person name="Li Y.-P."/>
            <person name="Lin X."/>
            <person name="Liu S.X."/>
            <person name="Liu Z.A."/>
            <person name="Luros J.S."/>
            <person name="Maiti R."/>
            <person name="Marziali A."/>
            <person name="Militscher J."/>
            <person name="Miranda M."/>
            <person name="Nguyen M."/>
            <person name="Nierman W.C."/>
            <person name="Osborne B.I."/>
            <person name="Pai G."/>
            <person name="Peterson J."/>
            <person name="Pham P.K."/>
            <person name="Rizzo M."/>
            <person name="Rooney T."/>
            <person name="Rowley D."/>
            <person name="Sakano H."/>
            <person name="Salzberg S.L."/>
            <person name="Schwartz J.R."/>
            <person name="Shinn P."/>
            <person name="Southwick A.M."/>
            <person name="Sun H."/>
            <person name="Tallon L.J."/>
            <person name="Tambunga G."/>
            <person name="Toriumi M.J."/>
            <person name="Town C.D."/>
            <person name="Utterback T."/>
            <person name="Van Aken S."/>
            <person name="Vaysberg M."/>
            <person name="Vysotskaia V.S."/>
            <person name="Walker M."/>
            <person name="Wu D."/>
            <person name="Yu G."/>
            <person name="Fraser C.M."/>
            <person name="Venter J.C."/>
            <person name="Davis R.W."/>
        </authorList>
    </citation>
    <scope>NUCLEOTIDE SEQUENCE [LARGE SCALE GENOMIC DNA]</scope>
    <source>
        <strain>cv. Columbia</strain>
    </source>
</reference>
<reference key="2">
    <citation type="journal article" date="2017" name="Plant J.">
        <title>Araport11: a complete reannotation of the Arabidopsis thaliana reference genome.</title>
        <authorList>
            <person name="Cheng C.Y."/>
            <person name="Krishnakumar V."/>
            <person name="Chan A.P."/>
            <person name="Thibaud-Nissen F."/>
            <person name="Schobel S."/>
            <person name="Town C.D."/>
        </authorList>
    </citation>
    <scope>GENOME REANNOTATION</scope>
    <source>
        <strain>cv. Columbia</strain>
    </source>
</reference>
<reference key="3">
    <citation type="journal article" date="2007" name="Plant J.">
        <title>Convergent evolution in the BAHD family of acyl transferases: identification and characterization of anthocyanin acyl transferases from Arabidopsis thaliana.</title>
        <authorList>
            <person name="Luo J."/>
            <person name="Nishiyama Y."/>
            <person name="Fuell C."/>
            <person name="Taguchi G."/>
            <person name="Elliott K."/>
            <person name="Hill L."/>
            <person name="Tanaka Y."/>
            <person name="Kitayama M."/>
            <person name="Yamazaki M."/>
            <person name="Bailey P."/>
            <person name="Parr A."/>
            <person name="Michael A.J."/>
            <person name="Saito K."/>
            <person name="Martin C."/>
        </authorList>
    </citation>
    <scope>FUNCTION</scope>
    <scope>CATALYTIC ACTIVITY</scope>
    <scope>BIOPHYSICOCHEMICAL PROPERTIES</scope>
    <scope>TISSUE SPECIFICITY</scope>
    <scope>DISRUPTION PHENOTYPE</scope>
    <source>
        <strain>cv. Columbia</strain>
    </source>
</reference>
<reference key="4">
    <citation type="journal article" date="2013" name="Plant Physiol. Biochem.">
        <title>The flavonoid biosynthetic pathway in Arabidopsis: Structural and genetic diversity.</title>
        <authorList>
            <person name="Saito K."/>
            <person name="Yonekura-Sakakibara K."/>
            <person name="Nakabayashi R."/>
            <person name="Higashi Y."/>
            <person name="Yamazaki M."/>
            <person name="Tohge T."/>
            <person name="Fernie A.R."/>
        </authorList>
    </citation>
    <scope>REVIEW</scope>
    <scope>NOMENCLATURE</scope>
</reference>
<accession>Q9LR73</accession>
<gene>
    <name type="primary">3AT2</name>
    <name type="ordered locus">At1g03495</name>
    <name type="ORF">F21B7.12</name>
</gene>
<name>3AT2_ARATH</name>
<evidence type="ECO:0000250" key="1"/>
<evidence type="ECO:0000250" key="2">
    <source>
        <dbReference type="UniProtKB" id="Q940Z5"/>
    </source>
</evidence>
<evidence type="ECO:0000269" key="3">
    <source>
    </source>
</evidence>
<evidence type="ECO:0000305" key="4"/>
<organism>
    <name type="scientific">Arabidopsis thaliana</name>
    <name type="common">Mouse-ear cress</name>
    <dbReference type="NCBI Taxonomy" id="3702"/>
    <lineage>
        <taxon>Eukaryota</taxon>
        <taxon>Viridiplantae</taxon>
        <taxon>Streptophyta</taxon>
        <taxon>Embryophyta</taxon>
        <taxon>Tracheophyta</taxon>
        <taxon>Spermatophyta</taxon>
        <taxon>Magnoliopsida</taxon>
        <taxon>eudicotyledons</taxon>
        <taxon>Gunneridae</taxon>
        <taxon>Pentapetalae</taxon>
        <taxon>rosids</taxon>
        <taxon>malvids</taxon>
        <taxon>Brassicales</taxon>
        <taxon>Brassicaceae</taxon>
        <taxon>Camelineae</taxon>
        <taxon>Arabidopsis</taxon>
    </lineage>
</organism>
<keyword id="KW-0007">Acetylation</keyword>
<keyword id="KW-0012">Acyltransferase</keyword>
<keyword id="KW-1185">Reference proteome</keyword>
<keyword id="KW-0808">Transferase</keyword>
<comment type="function">
    <text evidence="3">Involved in the acylation of the 6'' position of the 3-O-glucose residue of anthocyanin. Also able to use flavonol 3-glucosides as the acyl acceptor.</text>
</comment>
<comment type="biophysicochemical properties">
    <kinetics>
        <KM evidence="3">6.6 uM for p-coumaroyl-CoA (with cyanidin 3,5-diglucoside as cosubstrate)</KM>
        <KM evidence="3">9.4 uM for feruloyl-CoA (with cyanidin 3,5-diglucoside as cosubstrate)</KM>
        <KM evidence="3">4.9 uM for caffeoyl-CoA (with cyanidin 3,5-diglucoside as cosubstrate)</KM>
        <KM evidence="3">10.3 uM for cyanidin 3-glucoside (with malonyl-CoA as cosubstrate)</KM>
        <KM evidence="3">9.9 uM for pelargonidin 3-glucoside (with malonyl-CoA as cosubstrate)</KM>
        <KM evidence="3">7.6 uM for malvidin 3-glucoside (with malonyl-CoA as cosubstrate)</KM>
        <KM evidence="3">67.9 uM for quercetin 3-glucoside (with malonyl-CoA as cosubstrate)</KM>
        <KM evidence="3">82.6 uM for kaempferol 3-glucoside (with malonyl-CoA as cosubstrate)</KM>
        <KM evidence="3">11.6 uM for kaempferol 7-glucoside (with malonyl-CoA as cosubstrate)</KM>
        <KM evidence="3">186 uM for cyanidin 3,5-diglucoside (with malonyl-CoA as cosubstrate)</KM>
        <KM evidence="3">152 uM for pelargonidin 3,5-diglucoside (with malonyl-CoA as cosubstrate)</KM>
        <text>kcat is 6.9 sec(-1) for p-coumaroyl-CoA. kcat is 7.7 sec(-1) for feruloyl-CoA. kcat is 8.5 sec(-1) for caffeoyl-CoA. kcat is 6.9 sec(-1) for cyanidin 3-glucoside. kcat is 7.5 sec(-1) for pelargonidin 3-glucoside. kcat is 6.3 sec(-1) for malvidin 3-glucoside. kcat is 0.9 sec(-1) for quercetin 3-glucoside. kcat is 0.8 sec(-1) for kaempferol 3-glucoside. kcat is 2.0 sec(-1) for kaempferol 7-glucoside. kcat is &lt;0.001 sec(-1) for cyanidin 3,5-diglucoside. kcat is &lt;0.001 sec(-1) for pelargonidin 3,5-diglucoside.</text>
    </kinetics>
</comment>
<comment type="tissue specificity">
    <text evidence="3">Highly expressed in flowers, and leaves. Lower levels of expression in stems, roots and siliques.</text>
</comment>
<comment type="disruption phenotype">
    <text evidence="3">No visible phenotype, probably due to the redundancy with 3AT1.</text>
</comment>
<comment type="similarity">
    <text evidence="4">Belongs to the plant acyltransferase family.</text>
</comment>